<comment type="function">
    <text evidence="1">Catalyzes the GTP-dependent ribosomal translocation step during translation elongation. During this step, the ribosome changes from the pre-translocational (PRE) to the post-translocational (POST) state as the newly formed A-site-bound peptidyl-tRNA and P-site-bound deacylated tRNA move to the P and E sites, respectively. Catalyzes the coordinated movement of the two tRNA molecules, the mRNA and conformational changes in the ribosome.</text>
</comment>
<comment type="subcellular location">
    <subcellularLocation>
        <location evidence="1">Cytoplasm</location>
    </subcellularLocation>
</comment>
<comment type="similarity">
    <text evidence="1">Belongs to the TRAFAC class translation factor GTPase superfamily. Classic translation factor GTPase family. EF-G/EF-2 subfamily.</text>
</comment>
<accession>Q5L400</accession>
<proteinExistence type="inferred from homology"/>
<dbReference type="EMBL" id="BA000043">
    <property type="protein sequence ID" value="BAD74388.1"/>
    <property type="molecule type" value="Genomic_DNA"/>
</dbReference>
<dbReference type="RefSeq" id="WP_011229618.1">
    <property type="nucleotide sequence ID" value="NC_006510.1"/>
</dbReference>
<dbReference type="SMR" id="Q5L400"/>
<dbReference type="STRING" id="235909.GK0103"/>
<dbReference type="KEGG" id="gka:GK0103"/>
<dbReference type="PATRIC" id="fig|235909.7.peg.158"/>
<dbReference type="eggNOG" id="COG0480">
    <property type="taxonomic scope" value="Bacteria"/>
</dbReference>
<dbReference type="HOGENOM" id="CLU_002794_4_1_9"/>
<dbReference type="Proteomes" id="UP000001172">
    <property type="component" value="Chromosome"/>
</dbReference>
<dbReference type="GO" id="GO:0005737">
    <property type="term" value="C:cytoplasm"/>
    <property type="evidence" value="ECO:0007669"/>
    <property type="project" value="UniProtKB-SubCell"/>
</dbReference>
<dbReference type="GO" id="GO:0005525">
    <property type="term" value="F:GTP binding"/>
    <property type="evidence" value="ECO:0007669"/>
    <property type="project" value="UniProtKB-UniRule"/>
</dbReference>
<dbReference type="GO" id="GO:0003924">
    <property type="term" value="F:GTPase activity"/>
    <property type="evidence" value="ECO:0007669"/>
    <property type="project" value="InterPro"/>
</dbReference>
<dbReference type="GO" id="GO:0003746">
    <property type="term" value="F:translation elongation factor activity"/>
    <property type="evidence" value="ECO:0007669"/>
    <property type="project" value="UniProtKB-UniRule"/>
</dbReference>
<dbReference type="GO" id="GO:0032790">
    <property type="term" value="P:ribosome disassembly"/>
    <property type="evidence" value="ECO:0007669"/>
    <property type="project" value="TreeGrafter"/>
</dbReference>
<dbReference type="CDD" id="cd01886">
    <property type="entry name" value="EF-G"/>
    <property type="match status" value="1"/>
</dbReference>
<dbReference type="CDD" id="cd16262">
    <property type="entry name" value="EFG_III"/>
    <property type="match status" value="1"/>
</dbReference>
<dbReference type="CDD" id="cd01434">
    <property type="entry name" value="EFG_mtEFG1_IV"/>
    <property type="match status" value="1"/>
</dbReference>
<dbReference type="CDD" id="cd03713">
    <property type="entry name" value="EFG_mtEFG_C"/>
    <property type="match status" value="1"/>
</dbReference>
<dbReference type="CDD" id="cd04088">
    <property type="entry name" value="EFG_mtEFG_II"/>
    <property type="match status" value="1"/>
</dbReference>
<dbReference type="FunFam" id="2.40.30.10:FF:000006">
    <property type="entry name" value="Elongation factor G"/>
    <property type="match status" value="1"/>
</dbReference>
<dbReference type="FunFam" id="3.30.230.10:FF:000003">
    <property type="entry name" value="Elongation factor G"/>
    <property type="match status" value="1"/>
</dbReference>
<dbReference type="FunFam" id="3.30.70.240:FF:000001">
    <property type="entry name" value="Elongation factor G"/>
    <property type="match status" value="1"/>
</dbReference>
<dbReference type="FunFam" id="3.30.70.870:FF:000001">
    <property type="entry name" value="Elongation factor G"/>
    <property type="match status" value="1"/>
</dbReference>
<dbReference type="FunFam" id="3.40.50.300:FF:000029">
    <property type="entry name" value="Elongation factor G"/>
    <property type="match status" value="1"/>
</dbReference>
<dbReference type="Gene3D" id="3.30.230.10">
    <property type="match status" value="1"/>
</dbReference>
<dbReference type="Gene3D" id="3.30.70.240">
    <property type="match status" value="1"/>
</dbReference>
<dbReference type="Gene3D" id="3.30.70.870">
    <property type="entry name" value="Elongation Factor G (Translational Gtpase), domain 3"/>
    <property type="match status" value="1"/>
</dbReference>
<dbReference type="Gene3D" id="3.40.50.300">
    <property type="entry name" value="P-loop containing nucleotide triphosphate hydrolases"/>
    <property type="match status" value="1"/>
</dbReference>
<dbReference type="Gene3D" id="2.40.30.10">
    <property type="entry name" value="Translation factors"/>
    <property type="match status" value="1"/>
</dbReference>
<dbReference type="HAMAP" id="MF_00054_B">
    <property type="entry name" value="EF_G_EF_2_B"/>
    <property type="match status" value="1"/>
</dbReference>
<dbReference type="InterPro" id="IPR041095">
    <property type="entry name" value="EFG_II"/>
</dbReference>
<dbReference type="InterPro" id="IPR009022">
    <property type="entry name" value="EFG_III"/>
</dbReference>
<dbReference type="InterPro" id="IPR035647">
    <property type="entry name" value="EFG_III/V"/>
</dbReference>
<dbReference type="InterPro" id="IPR047872">
    <property type="entry name" value="EFG_IV"/>
</dbReference>
<dbReference type="InterPro" id="IPR035649">
    <property type="entry name" value="EFG_V"/>
</dbReference>
<dbReference type="InterPro" id="IPR000640">
    <property type="entry name" value="EFG_V-like"/>
</dbReference>
<dbReference type="InterPro" id="IPR004161">
    <property type="entry name" value="EFTu-like_2"/>
</dbReference>
<dbReference type="InterPro" id="IPR031157">
    <property type="entry name" value="G_TR_CS"/>
</dbReference>
<dbReference type="InterPro" id="IPR027417">
    <property type="entry name" value="P-loop_NTPase"/>
</dbReference>
<dbReference type="InterPro" id="IPR020568">
    <property type="entry name" value="Ribosomal_Su5_D2-typ_SF"/>
</dbReference>
<dbReference type="InterPro" id="IPR014721">
    <property type="entry name" value="Ribsml_uS5_D2-typ_fold_subgr"/>
</dbReference>
<dbReference type="InterPro" id="IPR005225">
    <property type="entry name" value="Small_GTP-bd"/>
</dbReference>
<dbReference type="InterPro" id="IPR000795">
    <property type="entry name" value="T_Tr_GTP-bd_dom"/>
</dbReference>
<dbReference type="InterPro" id="IPR009000">
    <property type="entry name" value="Transl_B-barrel_sf"/>
</dbReference>
<dbReference type="InterPro" id="IPR004540">
    <property type="entry name" value="Transl_elong_EFG/EF2"/>
</dbReference>
<dbReference type="InterPro" id="IPR005517">
    <property type="entry name" value="Transl_elong_EFG/EF2_IV"/>
</dbReference>
<dbReference type="NCBIfam" id="TIGR00484">
    <property type="entry name" value="EF-G"/>
    <property type="match status" value="1"/>
</dbReference>
<dbReference type="NCBIfam" id="NF009379">
    <property type="entry name" value="PRK12740.1-3"/>
    <property type="match status" value="1"/>
</dbReference>
<dbReference type="NCBIfam" id="NF009381">
    <property type="entry name" value="PRK12740.1-5"/>
    <property type="match status" value="1"/>
</dbReference>
<dbReference type="NCBIfam" id="NF009891">
    <property type="entry name" value="PRK13351.1-1"/>
    <property type="match status" value="1"/>
</dbReference>
<dbReference type="NCBIfam" id="TIGR00231">
    <property type="entry name" value="small_GTP"/>
    <property type="match status" value="1"/>
</dbReference>
<dbReference type="PANTHER" id="PTHR43261:SF1">
    <property type="entry name" value="RIBOSOME-RELEASING FACTOR 2, MITOCHONDRIAL"/>
    <property type="match status" value="1"/>
</dbReference>
<dbReference type="PANTHER" id="PTHR43261">
    <property type="entry name" value="TRANSLATION ELONGATION FACTOR G-RELATED"/>
    <property type="match status" value="1"/>
</dbReference>
<dbReference type="Pfam" id="PF00679">
    <property type="entry name" value="EFG_C"/>
    <property type="match status" value="1"/>
</dbReference>
<dbReference type="Pfam" id="PF14492">
    <property type="entry name" value="EFG_III"/>
    <property type="match status" value="1"/>
</dbReference>
<dbReference type="Pfam" id="PF03764">
    <property type="entry name" value="EFG_IV"/>
    <property type="match status" value="1"/>
</dbReference>
<dbReference type="Pfam" id="PF00009">
    <property type="entry name" value="GTP_EFTU"/>
    <property type="match status" value="1"/>
</dbReference>
<dbReference type="Pfam" id="PF03144">
    <property type="entry name" value="GTP_EFTU_D2"/>
    <property type="match status" value="1"/>
</dbReference>
<dbReference type="PRINTS" id="PR00315">
    <property type="entry name" value="ELONGATNFCT"/>
</dbReference>
<dbReference type="SMART" id="SM00838">
    <property type="entry name" value="EFG_C"/>
    <property type="match status" value="1"/>
</dbReference>
<dbReference type="SMART" id="SM00889">
    <property type="entry name" value="EFG_IV"/>
    <property type="match status" value="1"/>
</dbReference>
<dbReference type="SUPFAM" id="SSF54980">
    <property type="entry name" value="EF-G C-terminal domain-like"/>
    <property type="match status" value="2"/>
</dbReference>
<dbReference type="SUPFAM" id="SSF52540">
    <property type="entry name" value="P-loop containing nucleoside triphosphate hydrolases"/>
    <property type="match status" value="1"/>
</dbReference>
<dbReference type="SUPFAM" id="SSF54211">
    <property type="entry name" value="Ribosomal protein S5 domain 2-like"/>
    <property type="match status" value="1"/>
</dbReference>
<dbReference type="SUPFAM" id="SSF50447">
    <property type="entry name" value="Translation proteins"/>
    <property type="match status" value="1"/>
</dbReference>
<dbReference type="PROSITE" id="PS00301">
    <property type="entry name" value="G_TR_1"/>
    <property type="match status" value="1"/>
</dbReference>
<dbReference type="PROSITE" id="PS51722">
    <property type="entry name" value="G_TR_2"/>
    <property type="match status" value="1"/>
</dbReference>
<feature type="chain" id="PRO_0000091126" description="Elongation factor G">
    <location>
        <begin position="1"/>
        <end position="692"/>
    </location>
</feature>
<feature type="domain" description="tr-type G">
    <location>
        <begin position="8"/>
        <end position="282"/>
    </location>
</feature>
<feature type="binding site" evidence="1">
    <location>
        <begin position="17"/>
        <end position="24"/>
    </location>
    <ligand>
        <name>GTP</name>
        <dbReference type="ChEBI" id="CHEBI:37565"/>
    </ligand>
</feature>
<feature type="binding site" evidence="1">
    <location>
        <begin position="81"/>
        <end position="85"/>
    </location>
    <ligand>
        <name>GTP</name>
        <dbReference type="ChEBI" id="CHEBI:37565"/>
    </ligand>
</feature>
<feature type="binding site" evidence="1">
    <location>
        <begin position="135"/>
        <end position="138"/>
    </location>
    <ligand>
        <name>GTP</name>
        <dbReference type="ChEBI" id="CHEBI:37565"/>
    </ligand>
</feature>
<protein>
    <recommendedName>
        <fullName evidence="1">Elongation factor G</fullName>
        <shortName evidence="1">EF-G</shortName>
    </recommendedName>
</protein>
<name>EFG_GEOKA</name>
<keyword id="KW-0963">Cytoplasm</keyword>
<keyword id="KW-0251">Elongation factor</keyword>
<keyword id="KW-0342">GTP-binding</keyword>
<keyword id="KW-0547">Nucleotide-binding</keyword>
<keyword id="KW-0648">Protein biosynthesis</keyword>
<keyword id="KW-1185">Reference proteome</keyword>
<reference key="1">
    <citation type="journal article" date="2004" name="Nucleic Acids Res.">
        <title>Thermoadaptation trait revealed by the genome sequence of thermophilic Geobacillus kaustophilus.</title>
        <authorList>
            <person name="Takami H."/>
            <person name="Takaki Y."/>
            <person name="Chee G.-J."/>
            <person name="Nishi S."/>
            <person name="Shimamura S."/>
            <person name="Suzuki H."/>
            <person name="Matsui S."/>
            <person name="Uchiyama I."/>
        </authorList>
    </citation>
    <scope>NUCLEOTIDE SEQUENCE [LARGE SCALE GENOMIC DNA]</scope>
    <source>
        <strain>HTA426</strain>
    </source>
</reference>
<evidence type="ECO:0000255" key="1">
    <source>
        <dbReference type="HAMAP-Rule" id="MF_00054"/>
    </source>
</evidence>
<organism>
    <name type="scientific">Geobacillus kaustophilus (strain HTA426)</name>
    <dbReference type="NCBI Taxonomy" id="235909"/>
    <lineage>
        <taxon>Bacteria</taxon>
        <taxon>Bacillati</taxon>
        <taxon>Bacillota</taxon>
        <taxon>Bacilli</taxon>
        <taxon>Bacillales</taxon>
        <taxon>Anoxybacillaceae</taxon>
        <taxon>Geobacillus</taxon>
        <taxon>Geobacillus thermoleovorans group</taxon>
    </lineage>
</organism>
<gene>
    <name evidence="1" type="primary">fusA</name>
    <name type="ordered locus">GK0103</name>
</gene>
<sequence length="692" mass="77023">MAREFSLEKTRNIGIMAHIDAGKTTTTERILFYTGRVHKIGEVHEGAATMDWMEQEQERGITITSAATTAQWKGHRINIIDTPGHVDFTVEVERSLRVLDGAITVLDAQSGVEPQTETVWRQATTYGVPRIVFVNKMDKIGADFLYSVKTLHDRLQANAHPVQLPIGAEDQFSGIIDLVEMCAYHYHDELGKNIERIDIPEEYRDMAEEYHNKLIEAVAELDEELMMKYLEGEEITTEELKAAIRKATISVEFFPVFCGSAFKNKGVQLLLDGVVDYLPSPVDIPAIRGVVPDTEEEVTREASDDAPFAALAFKIMTDPYVGKLTFIRVYSGTLDSGSYVMNTTKGKRERIGRLLQMHANHRQEISKVYAGDIAAAVGLKDTTTGDTLCDEKHPVILESMQFPEPVISVAIEPKSKADQDKMSQALQKLQEEDPTFRAHTDPETGQTIISGMGELHLDIIVDRMRREFKVEANVGAPQVAYRETFRKSAQVEGKFIRQSGGRGQYGHVWIEFSPNERGKGFEFENAIVGGVVPKEYVPAVQAGLEEAMQNGVLAGYPVVDIKAKLFDGSYHDVDSSEMAFKIAASLALKNAATKCDPVLLEPIMKVEVVIPEEYLGDIMGDITSRRGRIEGMEARGNAQVVRAMVPMAEMFGYATSLRSNTQGRGTFSMVFDHYEEVPKNIADEIIKKNKGE</sequence>